<reference key="1">
    <citation type="journal article" date="2003" name="Proc. Natl. Acad. Sci. U.S.A.">
        <title>The complete genome sequence of Chromobacterium violaceum reveals remarkable and exploitable bacterial adaptability.</title>
        <authorList>
            <person name="Vasconcelos A.T.R."/>
            <person name="de Almeida D.F."/>
            <person name="Hungria M."/>
            <person name="Guimaraes C.T."/>
            <person name="Antonio R.V."/>
            <person name="Almeida F.C."/>
            <person name="de Almeida L.G.P."/>
            <person name="de Almeida R."/>
            <person name="Alves-Gomes J.A."/>
            <person name="Andrade E.M."/>
            <person name="Araripe J."/>
            <person name="de Araujo M.F.F."/>
            <person name="Astolfi-Filho S."/>
            <person name="Azevedo V."/>
            <person name="Baptista A.J."/>
            <person name="Bataus L.A.M."/>
            <person name="Batista J.S."/>
            <person name="Belo A."/>
            <person name="van den Berg C."/>
            <person name="Bogo M."/>
            <person name="Bonatto S."/>
            <person name="Bordignon J."/>
            <person name="Brigido M.M."/>
            <person name="Brito C.A."/>
            <person name="Brocchi M."/>
            <person name="Burity H.A."/>
            <person name="Camargo A.A."/>
            <person name="Cardoso D.D.P."/>
            <person name="Carneiro N.P."/>
            <person name="Carraro D.M."/>
            <person name="Carvalho C.M.B."/>
            <person name="Cascardo J.C.M."/>
            <person name="Cavada B.S."/>
            <person name="Chueire L.M.O."/>
            <person name="Creczynski-Pasa T.B."/>
            <person name="Cunha-Junior N.C."/>
            <person name="Fagundes N."/>
            <person name="Falcao C.L."/>
            <person name="Fantinatti F."/>
            <person name="Farias I.P."/>
            <person name="Felipe M.S.S."/>
            <person name="Ferrari L.P."/>
            <person name="Ferro J.A."/>
            <person name="Ferro M.I.T."/>
            <person name="Franco G.R."/>
            <person name="Freitas N.S.A."/>
            <person name="Furlan L.R."/>
            <person name="Gazzinelli R.T."/>
            <person name="Gomes E.A."/>
            <person name="Goncalves P.R."/>
            <person name="Grangeiro T.B."/>
            <person name="Grattapaglia D."/>
            <person name="Grisard E.C."/>
            <person name="Hanna E.S."/>
            <person name="Jardim S.N."/>
            <person name="Laurino J."/>
            <person name="Leoi L.C.T."/>
            <person name="Lima L.F.A."/>
            <person name="Loureiro M.F."/>
            <person name="Lyra M.C.C.P."/>
            <person name="Madeira H.M.F."/>
            <person name="Manfio G.P."/>
            <person name="Maranhao A.Q."/>
            <person name="Martins W.S."/>
            <person name="di Mauro S.M.Z."/>
            <person name="de Medeiros S.R.B."/>
            <person name="Meissner R.V."/>
            <person name="Moreira M.A.M."/>
            <person name="Nascimento F.F."/>
            <person name="Nicolas M.F."/>
            <person name="Oliveira J.G."/>
            <person name="Oliveira S.C."/>
            <person name="Paixao R.F.C."/>
            <person name="Parente J.A."/>
            <person name="Pedrosa F.O."/>
            <person name="Pena S.D.J."/>
            <person name="Pereira J.O."/>
            <person name="Pereira M."/>
            <person name="Pinto L.S.R.C."/>
            <person name="Pinto L.S."/>
            <person name="Porto J.I.R."/>
            <person name="Potrich D.P."/>
            <person name="Ramalho-Neto C.E."/>
            <person name="Reis A.M.M."/>
            <person name="Rigo L.U."/>
            <person name="Rondinelli E."/>
            <person name="Santos E.B.P."/>
            <person name="Santos F.R."/>
            <person name="Schneider M.P.C."/>
            <person name="Seuanez H.N."/>
            <person name="Silva A.M.R."/>
            <person name="da Silva A.L.C."/>
            <person name="Silva D.W."/>
            <person name="Silva R."/>
            <person name="Simoes I.C."/>
            <person name="Simon D."/>
            <person name="Soares C.M.A."/>
            <person name="Soares R.B.A."/>
            <person name="Souza E.M."/>
            <person name="Souza K.R.L."/>
            <person name="Souza R.C."/>
            <person name="Steffens M.B.R."/>
            <person name="Steindel M."/>
            <person name="Teixeira S.R."/>
            <person name="Urmenyi T."/>
            <person name="Vettore A."/>
            <person name="Wassem R."/>
            <person name="Zaha A."/>
            <person name="Simpson A.J.G."/>
        </authorList>
    </citation>
    <scope>NUCLEOTIDE SEQUENCE [LARGE SCALE GENOMIC DNA]</scope>
    <source>
        <strain>ATCC 12472 / DSM 30191 / JCM 1249 / CCUG 213 / NBRC 12614 / NCIMB 9131 / NCTC 9757 / MK</strain>
    </source>
</reference>
<feature type="chain" id="PRO_0000398665" description="Transcription termination factor Rho">
    <location>
        <begin position="1"/>
        <end position="418"/>
    </location>
</feature>
<feature type="domain" description="Rho RNA-BD" evidence="2">
    <location>
        <begin position="48"/>
        <end position="123"/>
    </location>
</feature>
<feature type="binding site" evidence="1">
    <location>
        <begin position="169"/>
        <end position="174"/>
    </location>
    <ligand>
        <name>ATP</name>
        <dbReference type="ChEBI" id="CHEBI:30616"/>
    </ligand>
</feature>
<feature type="binding site" evidence="1">
    <location>
        <begin position="181"/>
        <end position="186"/>
    </location>
    <ligand>
        <name>ATP</name>
        <dbReference type="ChEBI" id="CHEBI:30616"/>
    </ligand>
</feature>
<feature type="binding site" evidence="1">
    <location>
        <position position="212"/>
    </location>
    <ligand>
        <name>ATP</name>
        <dbReference type="ChEBI" id="CHEBI:30616"/>
    </ligand>
</feature>
<organism>
    <name type="scientific">Chromobacterium violaceum (strain ATCC 12472 / DSM 30191 / JCM 1249 / CCUG 213 / NBRC 12614 / NCIMB 9131 / NCTC 9757 / MK)</name>
    <dbReference type="NCBI Taxonomy" id="243365"/>
    <lineage>
        <taxon>Bacteria</taxon>
        <taxon>Pseudomonadati</taxon>
        <taxon>Pseudomonadota</taxon>
        <taxon>Betaproteobacteria</taxon>
        <taxon>Neisseriales</taxon>
        <taxon>Chromobacteriaceae</taxon>
        <taxon>Chromobacterium</taxon>
    </lineage>
</organism>
<sequence>MHLSDLKHLHVSELVEMAISNEIDGANRLRKQDLIFALLKNQAKKGESIFGEGTLEVLPDGFGFLRSPDTSYLAGPDDIYVSPSQIRRFNLHTGDSIEGEIRTPKDGERYFALVKVDKVNGEAPENSKHKILFENLTPLFPTEQFKLEREIRAEENITGRIIDLISPIGKGQRALLVAPPKSGKTVMLQHIAHAITANHPEAVLIVLLIDERPEEVTEMQRSVRGEVVSSTFDEPATRHVQVAEMVIEKAKRLVEHKKDVVILLDSITRLARAYNTVVPASGKVLTGGVDANALQRPKRFFGAARNVEEGGSLTIVATALIDTGSRMDDVIYEEFKGTGNSEIHLDRRMAEKRIFPALNINRSGTRREELLVPQDQLQRIWVLRKLLYPMDDLEAMEFLQDKIKATKSNQAFFDSMRR</sequence>
<accession>Q7NXP1</accession>
<name>RHO_CHRVO</name>
<proteinExistence type="inferred from homology"/>
<comment type="function">
    <text evidence="1">Facilitates transcription termination by a mechanism that involves Rho binding to the nascent RNA, activation of Rho's RNA-dependent ATPase activity, and release of the mRNA from the DNA template.</text>
</comment>
<comment type="subunit">
    <text evidence="1">Homohexamer. The homohexamer assembles into an open ring structure.</text>
</comment>
<comment type="similarity">
    <text evidence="1">Belongs to the Rho family.</text>
</comment>
<gene>
    <name evidence="1" type="primary">rho</name>
    <name type="ordered locus">CV_1585</name>
</gene>
<protein>
    <recommendedName>
        <fullName evidence="1">Transcription termination factor Rho</fullName>
        <ecNumber evidence="1">3.6.4.-</ecNumber>
    </recommendedName>
    <alternativeName>
        <fullName evidence="1">ATP-dependent helicase Rho</fullName>
    </alternativeName>
</protein>
<evidence type="ECO:0000255" key="1">
    <source>
        <dbReference type="HAMAP-Rule" id="MF_01884"/>
    </source>
</evidence>
<evidence type="ECO:0000255" key="2">
    <source>
        <dbReference type="PROSITE-ProRule" id="PRU01203"/>
    </source>
</evidence>
<dbReference type="EC" id="3.6.4.-" evidence="1"/>
<dbReference type="EMBL" id="AE016825">
    <property type="protein sequence ID" value="AAQ59261.2"/>
    <property type="molecule type" value="Genomic_DNA"/>
</dbReference>
<dbReference type="RefSeq" id="WP_011135137.1">
    <property type="nucleotide sequence ID" value="NC_005085.1"/>
</dbReference>
<dbReference type="SMR" id="Q7NXP1"/>
<dbReference type="STRING" id="243365.CV_1585"/>
<dbReference type="GeneID" id="66367268"/>
<dbReference type="KEGG" id="cvi:CV_1585"/>
<dbReference type="eggNOG" id="COG1158">
    <property type="taxonomic scope" value="Bacteria"/>
</dbReference>
<dbReference type="HOGENOM" id="CLU_016377_4_3_4"/>
<dbReference type="OrthoDB" id="9805197at2"/>
<dbReference type="Proteomes" id="UP000001424">
    <property type="component" value="Chromosome"/>
</dbReference>
<dbReference type="GO" id="GO:0005829">
    <property type="term" value="C:cytosol"/>
    <property type="evidence" value="ECO:0007669"/>
    <property type="project" value="UniProtKB-ARBA"/>
</dbReference>
<dbReference type="GO" id="GO:0005524">
    <property type="term" value="F:ATP binding"/>
    <property type="evidence" value="ECO:0007669"/>
    <property type="project" value="UniProtKB-UniRule"/>
</dbReference>
<dbReference type="GO" id="GO:0016887">
    <property type="term" value="F:ATP hydrolysis activity"/>
    <property type="evidence" value="ECO:0007669"/>
    <property type="project" value="InterPro"/>
</dbReference>
<dbReference type="GO" id="GO:0008186">
    <property type="term" value="F:ATP-dependent activity, acting on RNA"/>
    <property type="evidence" value="ECO:0007669"/>
    <property type="project" value="InterPro"/>
</dbReference>
<dbReference type="GO" id="GO:0004386">
    <property type="term" value="F:helicase activity"/>
    <property type="evidence" value="ECO:0007669"/>
    <property type="project" value="UniProtKB-UniRule"/>
</dbReference>
<dbReference type="GO" id="GO:0003723">
    <property type="term" value="F:RNA binding"/>
    <property type="evidence" value="ECO:0007669"/>
    <property type="project" value="UniProtKB-UniRule"/>
</dbReference>
<dbReference type="GO" id="GO:0006353">
    <property type="term" value="P:DNA-templated transcription termination"/>
    <property type="evidence" value="ECO:0007669"/>
    <property type="project" value="UniProtKB-UniRule"/>
</dbReference>
<dbReference type="CDD" id="cd04459">
    <property type="entry name" value="Rho_CSD"/>
    <property type="match status" value="1"/>
</dbReference>
<dbReference type="CDD" id="cd01128">
    <property type="entry name" value="rho_factor_C"/>
    <property type="match status" value="1"/>
</dbReference>
<dbReference type="FunFam" id="2.40.50.140:FF:000010">
    <property type="entry name" value="Transcription termination factor Rho"/>
    <property type="match status" value="1"/>
</dbReference>
<dbReference type="FunFam" id="3.40.50.300:FF:000072">
    <property type="entry name" value="Transcription termination factor Rho"/>
    <property type="match status" value="1"/>
</dbReference>
<dbReference type="Gene3D" id="1.10.720.10">
    <property type="match status" value="1"/>
</dbReference>
<dbReference type="Gene3D" id="2.40.50.140">
    <property type="entry name" value="Nucleic acid-binding proteins"/>
    <property type="match status" value="1"/>
</dbReference>
<dbReference type="Gene3D" id="3.40.50.300">
    <property type="entry name" value="P-loop containing nucleotide triphosphate hydrolases"/>
    <property type="match status" value="1"/>
</dbReference>
<dbReference type="HAMAP" id="MF_01884">
    <property type="entry name" value="Rho"/>
    <property type="match status" value="1"/>
</dbReference>
<dbReference type="InterPro" id="IPR003593">
    <property type="entry name" value="AAA+_ATPase"/>
</dbReference>
<dbReference type="InterPro" id="IPR000194">
    <property type="entry name" value="ATPase_F1/V1/A1_a/bsu_nucl-bd"/>
</dbReference>
<dbReference type="InterPro" id="IPR011129">
    <property type="entry name" value="CSD"/>
</dbReference>
<dbReference type="InterPro" id="IPR012340">
    <property type="entry name" value="NA-bd_OB-fold"/>
</dbReference>
<dbReference type="InterPro" id="IPR027417">
    <property type="entry name" value="P-loop_NTPase"/>
</dbReference>
<dbReference type="InterPro" id="IPR011112">
    <property type="entry name" value="Rho-like_N"/>
</dbReference>
<dbReference type="InterPro" id="IPR041703">
    <property type="entry name" value="Rho_factor_ATP-bd"/>
</dbReference>
<dbReference type="InterPro" id="IPR036269">
    <property type="entry name" value="Rho_N_sf"/>
</dbReference>
<dbReference type="InterPro" id="IPR011113">
    <property type="entry name" value="Rho_RNA-bd"/>
</dbReference>
<dbReference type="InterPro" id="IPR004665">
    <property type="entry name" value="Term_rho"/>
</dbReference>
<dbReference type="NCBIfam" id="NF006886">
    <property type="entry name" value="PRK09376.1"/>
    <property type="match status" value="1"/>
</dbReference>
<dbReference type="NCBIfam" id="TIGR00767">
    <property type="entry name" value="rho"/>
    <property type="match status" value="1"/>
</dbReference>
<dbReference type="PANTHER" id="PTHR46425">
    <property type="entry name" value="TRANSCRIPTION TERMINATION FACTOR RHO"/>
    <property type="match status" value="1"/>
</dbReference>
<dbReference type="PANTHER" id="PTHR46425:SF1">
    <property type="entry name" value="TRANSCRIPTION TERMINATION FACTOR RHO"/>
    <property type="match status" value="1"/>
</dbReference>
<dbReference type="Pfam" id="PF00006">
    <property type="entry name" value="ATP-synt_ab"/>
    <property type="match status" value="1"/>
</dbReference>
<dbReference type="Pfam" id="PF07498">
    <property type="entry name" value="Rho_N"/>
    <property type="match status" value="1"/>
</dbReference>
<dbReference type="Pfam" id="PF07497">
    <property type="entry name" value="Rho_RNA_bind"/>
    <property type="match status" value="1"/>
</dbReference>
<dbReference type="SMART" id="SM00382">
    <property type="entry name" value="AAA"/>
    <property type="match status" value="1"/>
</dbReference>
<dbReference type="SMART" id="SM00357">
    <property type="entry name" value="CSP"/>
    <property type="match status" value="1"/>
</dbReference>
<dbReference type="SMART" id="SM00959">
    <property type="entry name" value="Rho_N"/>
    <property type="match status" value="1"/>
</dbReference>
<dbReference type="SUPFAM" id="SSF50249">
    <property type="entry name" value="Nucleic acid-binding proteins"/>
    <property type="match status" value="1"/>
</dbReference>
<dbReference type="SUPFAM" id="SSF52540">
    <property type="entry name" value="P-loop containing nucleoside triphosphate hydrolases"/>
    <property type="match status" value="1"/>
</dbReference>
<dbReference type="SUPFAM" id="SSF68912">
    <property type="entry name" value="Rho N-terminal domain-like"/>
    <property type="match status" value="1"/>
</dbReference>
<dbReference type="PROSITE" id="PS51856">
    <property type="entry name" value="RHO_RNA_BD"/>
    <property type="match status" value="1"/>
</dbReference>
<keyword id="KW-0067">ATP-binding</keyword>
<keyword id="KW-0347">Helicase</keyword>
<keyword id="KW-0378">Hydrolase</keyword>
<keyword id="KW-0547">Nucleotide-binding</keyword>
<keyword id="KW-1185">Reference proteome</keyword>
<keyword id="KW-0694">RNA-binding</keyword>
<keyword id="KW-0804">Transcription</keyword>
<keyword id="KW-0805">Transcription regulation</keyword>
<keyword id="KW-0806">Transcription termination</keyword>